<accession>Q8YFC9</accession>
<reference key="1">
    <citation type="journal article" date="2002" name="Proc. Natl. Acad. Sci. U.S.A.">
        <title>The genome sequence of the facultative intracellular pathogen Brucella melitensis.</title>
        <authorList>
            <person name="DelVecchio V.G."/>
            <person name="Kapatral V."/>
            <person name="Redkar R.J."/>
            <person name="Patra G."/>
            <person name="Mujer C."/>
            <person name="Los T."/>
            <person name="Ivanova N."/>
            <person name="Anderson I."/>
            <person name="Bhattacharyya A."/>
            <person name="Lykidis A."/>
            <person name="Reznik G."/>
            <person name="Jablonski L."/>
            <person name="Larsen N."/>
            <person name="D'Souza M."/>
            <person name="Bernal A."/>
            <person name="Mazur M."/>
            <person name="Goltsman E."/>
            <person name="Selkov E."/>
            <person name="Elzer P.H."/>
            <person name="Hagius S."/>
            <person name="O'Callaghan D."/>
            <person name="Letesson J.-J."/>
            <person name="Haselkorn R."/>
            <person name="Kyrpides N.C."/>
            <person name="Overbeek R."/>
        </authorList>
    </citation>
    <scope>NUCLEOTIDE SEQUENCE [LARGE SCALE GENOMIC DNA]</scope>
    <source>
        <strain>ATCC 23456 / CCUG 17765 / NCTC 10094 / 16M</strain>
    </source>
</reference>
<comment type="function">
    <text evidence="1">Catalyzes the condensation of pantoate with beta-alanine in an ATP-dependent reaction via a pantoyl-adenylate intermediate.</text>
</comment>
<comment type="catalytic activity">
    <reaction evidence="1">
        <text>(R)-pantoate + beta-alanine + ATP = (R)-pantothenate + AMP + diphosphate + H(+)</text>
        <dbReference type="Rhea" id="RHEA:10912"/>
        <dbReference type="ChEBI" id="CHEBI:15378"/>
        <dbReference type="ChEBI" id="CHEBI:15980"/>
        <dbReference type="ChEBI" id="CHEBI:29032"/>
        <dbReference type="ChEBI" id="CHEBI:30616"/>
        <dbReference type="ChEBI" id="CHEBI:33019"/>
        <dbReference type="ChEBI" id="CHEBI:57966"/>
        <dbReference type="ChEBI" id="CHEBI:456215"/>
        <dbReference type="EC" id="6.3.2.1"/>
    </reaction>
</comment>
<comment type="pathway">
    <text evidence="1">Cofactor biosynthesis; (R)-pantothenate biosynthesis; (R)-pantothenate from (R)-pantoate and beta-alanine: step 1/1.</text>
</comment>
<comment type="subunit">
    <text evidence="1">Homodimer.</text>
</comment>
<comment type="subcellular location">
    <subcellularLocation>
        <location evidence="1">Cytoplasm</location>
    </subcellularLocation>
</comment>
<comment type="miscellaneous">
    <text evidence="1">The reaction proceeds by a bi uni uni bi ping pong mechanism.</text>
</comment>
<comment type="similarity">
    <text evidence="1">Belongs to the pantothenate synthetase family.</text>
</comment>
<sequence length="293" mass="32524">MQIIHTIEELRQALAPARQQGKKIGFVPTMGYLHKGHLELVRRARVENDVTLVSIFVNPLQFGANEDLGRYPRDLERDAGLLHDAQVDYLFAPTVSDMYPRPMQTVVDVPPLGNQMEGEARPGHFAGVATVVSKLFNIVGPDAAYFGEKDFQQLVIIRRMVDDMAIPVRIVGVETVREDDGLACSSRNVYLTPEQRRAAIIVPQALDEADRLYRSGMDDPDALEAAIRTFIGRQPLAVPEVIAIRDPETLERLPALQGRPILVALFVRVGATRLLDNRVIGHAAPQITQERAA</sequence>
<organism>
    <name type="scientific">Brucella melitensis biotype 1 (strain ATCC 23456 / CCUG 17765 / NCTC 10094 / 16M)</name>
    <dbReference type="NCBI Taxonomy" id="224914"/>
    <lineage>
        <taxon>Bacteria</taxon>
        <taxon>Pseudomonadati</taxon>
        <taxon>Pseudomonadota</taxon>
        <taxon>Alphaproteobacteria</taxon>
        <taxon>Hyphomicrobiales</taxon>
        <taxon>Brucellaceae</taxon>
        <taxon>Brucella/Ochrobactrum group</taxon>
        <taxon>Brucella</taxon>
    </lineage>
</organism>
<dbReference type="EC" id="6.3.2.1" evidence="1"/>
<dbReference type="EMBL" id="AE008917">
    <property type="protein sequence ID" value="AAL52774.1"/>
    <property type="molecule type" value="Genomic_DNA"/>
</dbReference>
<dbReference type="PIR" id="AC3451">
    <property type="entry name" value="AC3451"/>
</dbReference>
<dbReference type="RefSeq" id="WP_004682909.1">
    <property type="nucleotide sequence ID" value="NZ_GG703778.1"/>
</dbReference>
<dbReference type="PDB" id="3INN">
    <property type="method" value="X-ray"/>
    <property type="resolution" value="2.10 A"/>
    <property type="chains" value="A/B/C/D=1-293"/>
</dbReference>
<dbReference type="PDBsum" id="3INN"/>
<dbReference type="SMR" id="Q8YFC9"/>
<dbReference type="GeneID" id="97534282"/>
<dbReference type="KEGG" id="bme:BMEI1593"/>
<dbReference type="KEGG" id="bmel:DK63_1897"/>
<dbReference type="PATRIC" id="fig|224914.52.peg.1997"/>
<dbReference type="eggNOG" id="COG0414">
    <property type="taxonomic scope" value="Bacteria"/>
</dbReference>
<dbReference type="PhylomeDB" id="Q8YFC9"/>
<dbReference type="UniPathway" id="UPA00028">
    <property type="reaction ID" value="UER00005"/>
</dbReference>
<dbReference type="EvolutionaryTrace" id="Q8YFC9"/>
<dbReference type="Proteomes" id="UP000000419">
    <property type="component" value="Chromosome I"/>
</dbReference>
<dbReference type="GO" id="GO:0005829">
    <property type="term" value="C:cytosol"/>
    <property type="evidence" value="ECO:0007669"/>
    <property type="project" value="TreeGrafter"/>
</dbReference>
<dbReference type="GO" id="GO:0005524">
    <property type="term" value="F:ATP binding"/>
    <property type="evidence" value="ECO:0007669"/>
    <property type="project" value="UniProtKB-KW"/>
</dbReference>
<dbReference type="GO" id="GO:0004592">
    <property type="term" value="F:pantoate-beta-alanine ligase activity"/>
    <property type="evidence" value="ECO:0007669"/>
    <property type="project" value="UniProtKB-UniRule"/>
</dbReference>
<dbReference type="GO" id="GO:0015940">
    <property type="term" value="P:pantothenate biosynthetic process"/>
    <property type="evidence" value="ECO:0007669"/>
    <property type="project" value="UniProtKB-UniRule"/>
</dbReference>
<dbReference type="CDD" id="cd00560">
    <property type="entry name" value="PanC"/>
    <property type="match status" value="1"/>
</dbReference>
<dbReference type="FunFam" id="3.40.50.620:FF:000013">
    <property type="entry name" value="Pantothenate synthetase"/>
    <property type="match status" value="1"/>
</dbReference>
<dbReference type="Gene3D" id="3.40.50.620">
    <property type="entry name" value="HUPs"/>
    <property type="match status" value="1"/>
</dbReference>
<dbReference type="Gene3D" id="3.30.1300.10">
    <property type="entry name" value="Pantoate-beta-alanine ligase, C-terminal domain"/>
    <property type="match status" value="1"/>
</dbReference>
<dbReference type="HAMAP" id="MF_00158">
    <property type="entry name" value="PanC"/>
    <property type="match status" value="1"/>
</dbReference>
<dbReference type="InterPro" id="IPR004821">
    <property type="entry name" value="Cyt_trans-like"/>
</dbReference>
<dbReference type="InterPro" id="IPR003721">
    <property type="entry name" value="Pantoate_ligase"/>
</dbReference>
<dbReference type="InterPro" id="IPR042176">
    <property type="entry name" value="Pantoate_ligase_C"/>
</dbReference>
<dbReference type="InterPro" id="IPR014729">
    <property type="entry name" value="Rossmann-like_a/b/a_fold"/>
</dbReference>
<dbReference type="NCBIfam" id="TIGR00125">
    <property type="entry name" value="cyt_tran_rel"/>
    <property type="match status" value="1"/>
</dbReference>
<dbReference type="NCBIfam" id="TIGR00018">
    <property type="entry name" value="panC"/>
    <property type="match status" value="1"/>
</dbReference>
<dbReference type="PANTHER" id="PTHR21299">
    <property type="entry name" value="CYTIDYLATE KINASE/PANTOATE-BETA-ALANINE LIGASE"/>
    <property type="match status" value="1"/>
</dbReference>
<dbReference type="PANTHER" id="PTHR21299:SF1">
    <property type="entry name" value="PANTOATE--BETA-ALANINE LIGASE"/>
    <property type="match status" value="1"/>
</dbReference>
<dbReference type="Pfam" id="PF02569">
    <property type="entry name" value="Pantoate_ligase"/>
    <property type="match status" value="1"/>
</dbReference>
<dbReference type="SUPFAM" id="SSF52374">
    <property type="entry name" value="Nucleotidylyl transferase"/>
    <property type="match status" value="1"/>
</dbReference>
<proteinExistence type="evidence at protein level"/>
<feature type="chain" id="PRO_0000128210" description="Pantothenate synthetase">
    <location>
        <begin position="1"/>
        <end position="293"/>
    </location>
</feature>
<feature type="active site" description="Proton donor" evidence="1">
    <location>
        <position position="37"/>
    </location>
</feature>
<feature type="binding site" evidence="1">
    <location>
        <begin position="30"/>
        <end position="37"/>
    </location>
    <ligand>
        <name>ATP</name>
        <dbReference type="ChEBI" id="CHEBI:30616"/>
    </ligand>
</feature>
<feature type="binding site" evidence="1">
    <location>
        <position position="61"/>
    </location>
    <ligand>
        <name>(R)-pantoate</name>
        <dbReference type="ChEBI" id="CHEBI:15980"/>
    </ligand>
</feature>
<feature type="binding site" evidence="1">
    <location>
        <position position="61"/>
    </location>
    <ligand>
        <name>beta-alanine</name>
        <dbReference type="ChEBI" id="CHEBI:57966"/>
    </ligand>
</feature>
<feature type="binding site" evidence="1">
    <location>
        <begin position="147"/>
        <end position="150"/>
    </location>
    <ligand>
        <name>ATP</name>
        <dbReference type="ChEBI" id="CHEBI:30616"/>
    </ligand>
</feature>
<feature type="binding site" evidence="1">
    <location>
        <position position="153"/>
    </location>
    <ligand>
        <name>(R)-pantoate</name>
        <dbReference type="ChEBI" id="CHEBI:15980"/>
    </ligand>
</feature>
<feature type="binding site" evidence="1">
    <location>
        <position position="176"/>
    </location>
    <ligand>
        <name>ATP</name>
        <dbReference type="ChEBI" id="CHEBI:30616"/>
    </ligand>
</feature>
<feature type="binding site" evidence="1">
    <location>
        <begin position="184"/>
        <end position="187"/>
    </location>
    <ligand>
        <name>ATP</name>
        <dbReference type="ChEBI" id="CHEBI:30616"/>
    </ligand>
</feature>
<feature type="strand" evidence="2">
    <location>
        <begin position="2"/>
        <end position="4"/>
    </location>
</feature>
<feature type="helix" evidence="2">
    <location>
        <begin position="7"/>
        <end position="19"/>
    </location>
</feature>
<feature type="strand" evidence="2">
    <location>
        <begin position="24"/>
        <end position="29"/>
    </location>
</feature>
<feature type="helix" evidence="2">
    <location>
        <begin position="35"/>
        <end position="47"/>
    </location>
</feature>
<feature type="strand" evidence="2">
    <location>
        <begin position="49"/>
        <end position="55"/>
    </location>
</feature>
<feature type="helix" evidence="2">
    <location>
        <begin position="59"/>
        <end position="61"/>
    </location>
</feature>
<feature type="turn" evidence="2">
    <location>
        <begin position="68"/>
        <end position="70"/>
    </location>
</feature>
<feature type="helix" evidence="2">
    <location>
        <begin position="75"/>
        <end position="84"/>
    </location>
</feature>
<feature type="strand" evidence="2">
    <location>
        <begin position="88"/>
        <end position="91"/>
    </location>
</feature>
<feature type="helix" evidence="2">
    <location>
        <begin position="95"/>
        <end position="98"/>
    </location>
</feature>
<feature type="strand" evidence="2">
    <location>
        <begin position="106"/>
        <end position="108"/>
    </location>
</feature>
<feature type="helix" evidence="2">
    <location>
        <begin position="110"/>
        <end position="113"/>
    </location>
</feature>
<feature type="helix" evidence="2">
    <location>
        <begin position="117"/>
        <end position="120"/>
    </location>
</feature>
<feature type="helix" evidence="2">
    <location>
        <begin position="124"/>
        <end position="139"/>
    </location>
</feature>
<feature type="strand" evidence="2">
    <location>
        <begin position="142"/>
        <end position="147"/>
    </location>
</feature>
<feature type="helix" evidence="2">
    <location>
        <begin position="151"/>
        <end position="163"/>
    </location>
</feature>
<feature type="strand" evidence="2">
    <location>
        <begin position="169"/>
        <end position="173"/>
    </location>
</feature>
<feature type="helix" evidence="2">
    <location>
        <begin position="186"/>
        <end position="190"/>
    </location>
</feature>
<feature type="helix" evidence="2">
    <location>
        <begin position="193"/>
        <end position="198"/>
    </location>
</feature>
<feature type="helix" evidence="2">
    <location>
        <begin position="201"/>
        <end position="215"/>
    </location>
</feature>
<feature type="helix" evidence="2">
    <location>
        <begin position="220"/>
        <end position="230"/>
    </location>
</feature>
<feature type="turn" evidence="2">
    <location>
        <begin position="231"/>
        <end position="233"/>
    </location>
</feature>
<feature type="strand" evidence="2">
    <location>
        <begin position="237"/>
        <end position="245"/>
    </location>
</feature>
<feature type="turn" evidence="2">
    <location>
        <begin position="247"/>
        <end position="249"/>
    </location>
</feature>
<feature type="strand" evidence="2">
    <location>
        <begin position="261"/>
        <end position="269"/>
    </location>
</feature>
<feature type="strand" evidence="2">
    <location>
        <begin position="272"/>
        <end position="280"/>
    </location>
</feature>
<gene>
    <name evidence="1" type="primary">panC</name>
    <name type="ordered locus">BMEI1593</name>
</gene>
<evidence type="ECO:0000255" key="1">
    <source>
        <dbReference type="HAMAP-Rule" id="MF_00158"/>
    </source>
</evidence>
<evidence type="ECO:0007829" key="2">
    <source>
        <dbReference type="PDB" id="3INN"/>
    </source>
</evidence>
<protein>
    <recommendedName>
        <fullName evidence="1">Pantothenate synthetase</fullName>
        <shortName evidence="1">PS</shortName>
        <ecNumber evidence="1">6.3.2.1</ecNumber>
    </recommendedName>
    <alternativeName>
        <fullName evidence="1">Pantoate--beta-alanine ligase</fullName>
    </alternativeName>
    <alternativeName>
        <fullName evidence="1">Pantoate-activating enzyme</fullName>
    </alternativeName>
</protein>
<keyword id="KW-0002">3D-structure</keyword>
<keyword id="KW-0067">ATP-binding</keyword>
<keyword id="KW-0963">Cytoplasm</keyword>
<keyword id="KW-0436">Ligase</keyword>
<keyword id="KW-0547">Nucleotide-binding</keyword>
<keyword id="KW-0566">Pantothenate biosynthesis</keyword>
<name>PANC_BRUME</name>